<feature type="chain" id="PRO_0000237487" description="DNA-directed RNA polymerase subunit omega">
    <location>
        <begin position="1"/>
        <end position="70"/>
    </location>
</feature>
<protein>
    <recommendedName>
        <fullName evidence="1">DNA-directed RNA polymerase subunit omega</fullName>
        <shortName evidence="1">RNAP omega subunit</shortName>
        <ecNumber evidence="1">2.7.7.6</ecNumber>
    </recommendedName>
    <alternativeName>
        <fullName evidence="1">RNA polymerase omega subunit</fullName>
    </alternativeName>
    <alternativeName>
        <fullName evidence="1">Transcriptase subunit omega</fullName>
    </alternativeName>
</protein>
<evidence type="ECO:0000255" key="1">
    <source>
        <dbReference type="HAMAP-Rule" id="MF_00366"/>
    </source>
</evidence>
<sequence length="70" mass="8073">MNSNDLAKRGESLIRHSTNRYLTTVRIAFRAKQRRFDDFDGLLEESTVKPVQRAIIELSDEQDQPDLLPG</sequence>
<name>RPOZ_PROMT</name>
<dbReference type="EC" id="2.7.7.6" evidence="1"/>
<dbReference type="EMBL" id="CP000095">
    <property type="protein sequence ID" value="AAZ58454.1"/>
    <property type="molecule type" value="Genomic_DNA"/>
</dbReference>
<dbReference type="RefSeq" id="WP_011295310.1">
    <property type="nucleotide sequence ID" value="NC_007335.2"/>
</dbReference>
<dbReference type="SMR" id="Q46J74"/>
<dbReference type="STRING" id="59920.PMN2A_0963"/>
<dbReference type="KEGG" id="pmn:PMN2A_0963"/>
<dbReference type="HOGENOM" id="CLU_175526_0_0_3"/>
<dbReference type="OrthoDB" id="463386at2"/>
<dbReference type="PhylomeDB" id="Q46J74"/>
<dbReference type="Proteomes" id="UP000002535">
    <property type="component" value="Chromosome"/>
</dbReference>
<dbReference type="GO" id="GO:0000428">
    <property type="term" value="C:DNA-directed RNA polymerase complex"/>
    <property type="evidence" value="ECO:0007669"/>
    <property type="project" value="UniProtKB-KW"/>
</dbReference>
<dbReference type="GO" id="GO:0003677">
    <property type="term" value="F:DNA binding"/>
    <property type="evidence" value="ECO:0007669"/>
    <property type="project" value="UniProtKB-UniRule"/>
</dbReference>
<dbReference type="GO" id="GO:0003899">
    <property type="term" value="F:DNA-directed RNA polymerase activity"/>
    <property type="evidence" value="ECO:0007669"/>
    <property type="project" value="UniProtKB-UniRule"/>
</dbReference>
<dbReference type="GO" id="GO:0006351">
    <property type="term" value="P:DNA-templated transcription"/>
    <property type="evidence" value="ECO:0007669"/>
    <property type="project" value="UniProtKB-UniRule"/>
</dbReference>
<dbReference type="HAMAP" id="MF_00366">
    <property type="entry name" value="RNApol_bact_RpoZ"/>
    <property type="match status" value="1"/>
</dbReference>
<dbReference type="InterPro" id="IPR003716">
    <property type="entry name" value="DNA-dir_RNA_pol_omega"/>
</dbReference>
<dbReference type="InterPro" id="IPR006110">
    <property type="entry name" value="Pol_omega/Rpo6/RPB6"/>
</dbReference>
<dbReference type="NCBIfam" id="NF001574">
    <property type="entry name" value="PRK00392.2-5"/>
    <property type="match status" value="1"/>
</dbReference>
<dbReference type="Pfam" id="PF01192">
    <property type="entry name" value="RNA_pol_Rpb6"/>
    <property type="match status" value="1"/>
</dbReference>
<gene>
    <name evidence="1" type="primary">rpoZ</name>
    <name type="ordered locus">PMN2A_0963</name>
</gene>
<reference key="1">
    <citation type="journal article" date="2007" name="PLoS Genet.">
        <title>Patterns and implications of gene gain and loss in the evolution of Prochlorococcus.</title>
        <authorList>
            <person name="Kettler G.C."/>
            <person name="Martiny A.C."/>
            <person name="Huang K."/>
            <person name="Zucker J."/>
            <person name="Coleman M.L."/>
            <person name="Rodrigue S."/>
            <person name="Chen F."/>
            <person name="Lapidus A."/>
            <person name="Ferriera S."/>
            <person name="Johnson J."/>
            <person name="Steglich C."/>
            <person name="Church G.M."/>
            <person name="Richardson P."/>
            <person name="Chisholm S.W."/>
        </authorList>
    </citation>
    <scope>NUCLEOTIDE SEQUENCE [LARGE SCALE GENOMIC DNA]</scope>
    <source>
        <strain>NATL2A</strain>
    </source>
</reference>
<keyword id="KW-0240">DNA-directed RNA polymerase</keyword>
<keyword id="KW-0548">Nucleotidyltransferase</keyword>
<keyword id="KW-1185">Reference proteome</keyword>
<keyword id="KW-0804">Transcription</keyword>
<keyword id="KW-0808">Transferase</keyword>
<organism>
    <name type="scientific">Prochlorococcus marinus (strain NATL2A)</name>
    <dbReference type="NCBI Taxonomy" id="59920"/>
    <lineage>
        <taxon>Bacteria</taxon>
        <taxon>Bacillati</taxon>
        <taxon>Cyanobacteriota</taxon>
        <taxon>Cyanophyceae</taxon>
        <taxon>Synechococcales</taxon>
        <taxon>Prochlorococcaceae</taxon>
        <taxon>Prochlorococcus</taxon>
    </lineage>
</organism>
<proteinExistence type="inferred from homology"/>
<comment type="function">
    <text evidence="1">Promotes RNA polymerase assembly. Latches the N- and C-terminal regions of the beta' subunit thereby facilitating its interaction with the beta and alpha subunits.</text>
</comment>
<comment type="catalytic activity">
    <reaction evidence="1">
        <text>RNA(n) + a ribonucleoside 5'-triphosphate = RNA(n+1) + diphosphate</text>
        <dbReference type="Rhea" id="RHEA:21248"/>
        <dbReference type="Rhea" id="RHEA-COMP:14527"/>
        <dbReference type="Rhea" id="RHEA-COMP:17342"/>
        <dbReference type="ChEBI" id="CHEBI:33019"/>
        <dbReference type="ChEBI" id="CHEBI:61557"/>
        <dbReference type="ChEBI" id="CHEBI:140395"/>
        <dbReference type="EC" id="2.7.7.6"/>
    </reaction>
</comment>
<comment type="subunit">
    <text evidence="1">In cyanobacteria the RNAP catalytic core is composed of 2 alpha, 1 beta, 1 beta', 1 gamma and 1 omega subunit. When a sigma factor is associated with the core the holoenzyme is formed, which can initiate transcription.</text>
</comment>
<comment type="similarity">
    <text evidence="1">Belongs to the RNA polymerase subunit omega family.</text>
</comment>
<accession>Q46J74</accession>